<feature type="chain" id="PRO_0000390666" description="Protein wntless" evidence="4">
    <location>
        <begin position="1"/>
        <end position="562"/>
    </location>
</feature>
<feature type="topological domain" description="Cytoplasmic" evidence="2">
    <location>
        <begin position="1"/>
        <end position="13"/>
    </location>
</feature>
<feature type="transmembrane region" description="Helical; Name=1" evidence="4">
    <location>
        <begin position="14"/>
        <end position="34"/>
    </location>
</feature>
<feature type="topological domain" description="Lumenal" evidence="2">
    <location>
        <begin position="35"/>
        <end position="239"/>
    </location>
</feature>
<feature type="transmembrane region" description="Helical; Name=2" evidence="4">
    <location>
        <begin position="240"/>
        <end position="260"/>
    </location>
</feature>
<feature type="topological domain" description="Cytoplasmic" evidence="2">
    <location>
        <begin position="261"/>
        <end position="270"/>
    </location>
</feature>
<feature type="transmembrane region" description="Helical; Name=3" evidence="4">
    <location>
        <begin position="271"/>
        <end position="291"/>
    </location>
</feature>
<feature type="topological domain" description="Lumenal" evidence="2">
    <location>
        <begin position="292"/>
        <end position="311"/>
    </location>
</feature>
<feature type="transmembrane region" description="Helical; Name=4" evidence="4">
    <location>
        <begin position="312"/>
        <end position="332"/>
    </location>
</feature>
<feature type="topological domain" description="Cytoplasmic" evidence="2">
    <location>
        <begin position="333"/>
        <end position="344"/>
    </location>
</feature>
<feature type="transmembrane region" description="Helical; Name=5" evidence="4">
    <location>
        <begin position="345"/>
        <end position="365"/>
    </location>
</feature>
<feature type="topological domain" description="Lumenal" evidence="2">
    <location>
        <begin position="366"/>
        <end position="386"/>
    </location>
</feature>
<feature type="transmembrane region" description="Helical; Name=6" evidence="4">
    <location>
        <begin position="387"/>
        <end position="407"/>
    </location>
</feature>
<feature type="topological domain" description="Cytoplasmic" evidence="2">
    <location>
        <begin position="408"/>
        <end position="441"/>
    </location>
</feature>
<feature type="transmembrane region" description="Helical; Name=7" evidence="4">
    <location>
        <begin position="442"/>
        <end position="462"/>
    </location>
</feature>
<feature type="topological domain" description="Lumenal" evidence="2">
    <location>
        <begin position="463"/>
        <end position="482"/>
    </location>
</feature>
<feature type="transmembrane region" description="Helical; Name=8" evidence="4">
    <location>
        <begin position="483"/>
        <end position="503"/>
    </location>
</feature>
<feature type="topological domain" description="Cytoplasmic" evidence="2">
    <location>
        <begin position="504"/>
        <end position="562"/>
    </location>
</feature>
<feature type="region of interest" description="Disordered" evidence="5">
    <location>
        <begin position="538"/>
        <end position="562"/>
    </location>
</feature>
<feature type="compositionally biased region" description="Polar residues" evidence="5">
    <location>
        <begin position="539"/>
        <end position="556"/>
    </location>
</feature>
<feature type="glycosylation site" description="N-linked (GlcNAc...) asparagine" evidence="4">
    <location>
        <position position="58"/>
    </location>
</feature>
<evidence type="ECO:0000250" key="1"/>
<evidence type="ECO:0000250" key="2">
    <source>
        <dbReference type="UniProtKB" id="Q5T9L3"/>
    </source>
</evidence>
<evidence type="ECO:0000250" key="3">
    <source>
        <dbReference type="UniProtKB" id="Q95ST2"/>
    </source>
</evidence>
<evidence type="ECO:0000255" key="4"/>
<evidence type="ECO:0000256" key="5">
    <source>
        <dbReference type="SAM" id="MobiDB-lite"/>
    </source>
</evidence>
<evidence type="ECO:0000312" key="6">
    <source>
        <dbReference type="EMBL" id="EDW29458.1"/>
    </source>
</evidence>
<gene>
    <name evidence="3" type="primary">wls</name>
    <name type="ORF">GL22839</name>
</gene>
<proteinExistence type="inferred from homology"/>
<keyword id="KW-1003">Cell membrane</keyword>
<keyword id="KW-0966">Cell projection</keyword>
<keyword id="KW-0217">Developmental protein</keyword>
<keyword id="KW-0256">Endoplasmic reticulum</keyword>
<keyword id="KW-0967">Endosome</keyword>
<keyword id="KW-0325">Glycoprotein</keyword>
<keyword id="KW-0333">Golgi apparatus</keyword>
<keyword id="KW-0472">Membrane</keyword>
<keyword id="KW-0628">Postsynaptic cell membrane</keyword>
<keyword id="KW-1185">Reference proteome</keyword>
<keyword id="KW-0709">Segmentation polarity protein</keyword>
<keyword id="KW-0770">Synapse</keyword>
<keyword id="KW-0812">Transmembrane</keyword>
<keyword id="KW-1133">Transmembrane helix</keyword>
<keyword id="KW-0879">Wnt signaling pathway</keyword>
<accession>B4GZN1</accession>
<protein>
    <recommendedName>
        <fullName evidence="3">Protein wntless</fullName>
    </recommendedName>
</protein>
<reference evidence="6" key="1">
    <citation type="journal article" date="2007" name="Nature">
        <title>Evolution of genes and genomes on the Drosophila phylogeny.</title>
        <authorList>
            <consortium name="Drosophila 12 genomes consortium"/>
        </authorList>
    </citation>
    <scope>NUCLEOTIDE SEQUENCE [LARGE SCALE GENOMIC DNA]</scope>
    <source>
        <strain>MSH-3 / Tucson 14011-0111.49</strain>
    </source>
</reference>
<name>WLS_DROPE</name>
<sequence length="562" mass="64090">MSGTILENLSGRKLSILVGSLLLCQVLCFLLGGLYAPVPAGHTNVLGSLCRENHARQNDTSFFLYSRGEGSCTQVTREEVEQDSMKLANQIVHVFQMPLPRDSRVLDYSRWQQNLIGVLQVEFGYDSSSELREPPKELQLTIDMRLAYRNKGDPDHAWKLYAHGVEHRYLDCVAAHIGSSETLYTCDMIPLFELGALHHSFYLLNLRFPLDTPKQMNLQFGHMHDLTLTAIHQNGGFTHVWLMLKTLLFPFVVGIMVWFWRRVHLLQRSPALLEYMLLYLGGALTFLNLPLEYLSLTIEMPYMLLLSDIRQGIFYAMLLSFWLVFAGEHMLIQDSHNKSTIRSRYWKHLSAVVVGCISLFVFDISERGVQLRNPFYSIWTTPLGAKVAMSFILLAGVSAAVYFLFLCYMISKVFKNIGDKRTSLPSMSQARRLHYEGLIYRFKFLMLATLLCAALTVTGFIMGQMAEGQWKWNDDVEIQLTSAFLTGVYGMWNIYIFALLILYAPSHKQWPTMHHSDETTQSNENIVASAASEEIEFSNLPSDSNPSEISSLTSFTRKVAFE</sequence>
<dbReference type="EMBL" id="CH479199">
    <property type="protein sequence ID" value="EDW29458.1"/>
    <property type="molecule type" value="Genomic_DNA"/>
</dbReference>
<dbReference type="SMR" id="B4GZN1"/>
<dbReference type="STRING" id="7234.B4GZN1"/>
<dbReference type="GlyCosmos" id="B4GZN1">
    <property type="glycosylation" value="1 site, No reported glycans"/>
</dbReference>
<dbReference type="EnsemblMetazoa" id="FBtr0188454">
    <property type="protein sequence ID" value="FBpp0186946"/>
    <property type="gene ID" value="FBgn0160430"/>
</dbReference>
<dbReference type="EnsemblMetazoa" id="XM_002024024.2">
    <property type="protein sequence ID" value="XP_002024060.1"/>
    <property type="gene ID" value="LOC6598972"/>
</dbReference>
<dbReference type="GeneID" id="6598972"/>
<dbReference type="KEGG" id="dpe:6598972"/>
<dbReference type="CTD" id="79971"/>
<dbReference type="eggNOG" id="ENOG502QSE2">
    <property type="taxonomic scope" value="Eukaryota"/>
</dbReference>
<dbReference type="HOGENOM" id="CLU_022911_0_0_1"/>
<dbReference type="OMA" id="GQWKWDE"/>
<dbReference type="OrthoDB" id="5804250at2759"/>
<dbReference type="PhylomeDB" id="B4GZN1"/>
<dbReference type="Proteomes" id="UP000008744">
    <property type="component" value="Unassembled WGS sequence"/>
</dbReference>
<dbReference type="GO" id="GO:0042995">
    <property type="term" value="C:cell projection"/>
    <property type="evidence" value="ECO:0007669"/>
    <property type="project" value="UniProtKB-KW"/>
</dbReference>
<dbReference type="GO" id="GO:0005769">
    <property type="term" value="C:early endosome"/>
    <property type="evidence" value="ECO:0007669"/>
    <property type="project" value="EnsemblMetazoa"/>
</dbReference>
<dbReference type="GO" id="GO:0005789">
    <property type="term" value="C:endoplasmic reticulum membrane"/>
    <property type="evidence" value="ECO:0000250"/>
    <property type="project" value="UniProtKB"/>
</dbReference>
<dbReference type="GO" id="GO:0010008">
    <property type="term" value="C:endosome membrane"/>
    <property type="evidence" value="ECO:0000250"/>
    <property type="project" value="UniProtKB"/>
</dbReference>
<dbReference type="GO" id="GO:0070062">
    <property type="term" value="C:extracellular exosome"/>
    <property type="evidence" value="ECO:0007669"/>
    <property type="project" value="EnsemblMetazoa"/>
</dbReference>
<dbReference type="GO" id="GO:0000139">
    <property type="term" value="C:Golgi membrane"/>
    <property type="evidence" value="ECO:0000250"/>
    <property type="project" value="UniProtKB"/>
</dbReference>
<dbReference type="GO" id="GO:0005771">
    <property type="term" value="C:multivesicular body"/>
    <property type="evidence" value="ECO:0007669"/>
    <property type="project" value="EnsemblMetazoa"/>
</dbReference>
<dbReference type="GO" id="GO:0031594">
    <property type="term" value="C:neuromuscular junction"/>
    <property type="evidence" value="ECO:0000250"/>
    <property type="project" value="UniProtKB"/>
</dbReference>
<dbReference type="GO" id="GO:0005886">
    <property type="term" value="C:plasma membrane"/>
    <property type="evidence" value="ECO:0000250"/>
    <property type="project" value="UniProtKB"/>
</dbReference>
<dbReference type="GO" id="GO:0045211">
    <property type="term" value="C:postsynaptic membrane"/>
    <property type="evidence" value="ECO:0000250"/>
    <property type="project" value="UniProtKB"/>
</dbReference>
<dbReference type="GO" id="GO:0042734">
    <property type="term" value="C:presynaptic membrane"/>
    <property type="evidence" value="ECO:0000250"/>
    <property type="project" value="UniProtKB"/>
</dbReference>
<dbReference type="GO" id="GO:0030672">
    <property type="term" value="C:synaptic vesicle membrane"/>
    <property type="evidence" value="ECO:0000250"/>
    <property type="project" value="UniProtKB"/>
</dbReference>
<dbReference type="GO" id="GO:0017147">
    <property type="term" value="F:Wnt-protein binding"/>
    <property type="evidence" value="ECO:0000250"/>
    <property type="project" value="UniProtKB"/>
</dbReference>
<dbReference type="GO" id="GO:0001745">
    <property type="term" value="P:compound eye morphogenesis"/>
    <property type="evidence" value="ECO:0007669"/>
    <property type="project" value="EnsemblMetazoa"/>
</dbReference>
<dbReference type="GO" id="GO:0035017">
    <property type="term" value="P:cuticle pattern formation"/>
    <property type="evidence" value="ECO:0007669"/>
    <property type="project" value="EnsemblMetazoa"/>
</dbReference>
<dbReference type="GO" id="GO:0043001">
    <property type="term" value="P:Golgi to plasma membrane protein transport"/>
    <property type="evidence" value="ECO:0007669"/>
    <property type="project" value="EnsemblMetazoa"/>
</dbReference>
<dbReference type="GO" id="GO:0007480">
    <property type="term" value="P:imaginal disc-derived leg morphogenesis"/>
    <property type="evidence" value="ECO:0007669"/>
    <property type="project" value="EnsemblMetazoa"/>
</dbReference>
<dbReference type="GO" id="GO:0008587">
    <property type="term" value="P:imaginal disc-derived wing margin morphogenesis"/>
    <property type="evidence" value="ECO:0000250"/>
    <property type="project" value="UniProtKB"/>
</dbReference>
<dbReference type="GO" id="GO:0006886">
    <property type="term" value="P:intracellular protein transport"/>
    <property type="evidence" value="ECO:0007669"/>
    <property type="project" value="TreeGrafter"/>
</dbReference>
<dbReference type="GO" id="GO:0050714">
    <property type="term" value="P:positive regulation of protein secretion"/>
    <property type="evidence" value="ECO:0000250"/>
    <property type="project" value="UniProtKB"/>
</dbReference>
<dbReference type="GO" id="GO:0061357">
    <property type="term" value="P:positive regulation of Wnt protein secretion"/>
    <property type="evidence" value="ECO:0007669"/>
    <property type="project" value="EnsemblMetazoa"/>
</dbReference>
<dbReference type="GO" id="GO:0030177">
    <property type="term" value="P:positive regulation of Wnt signaling pathway"/>
    <property type="evidence" value="ECO:0000250"/>
    <property type="project" value="UniProtKB"/>
</dbReference>
<dbReference type="GO" id="GO:0033157">
    <property type="term" value="P:regulation of intracellular protein transport"/>
    <property type="evidence" value="ECO:0000250"/>
    <property type="project" value="UniProtKB"/>
</dbReference>
<dbReference type="GO" id="GO:0007367">
    <property type="term" value="P:segment polarity determination"/>
    <property type="evidence" value="ECO:0000250"/>
    <property type="project" value="UniProtKB"/>
</dbReference>
<dbReference type="GO" id="GO:0099157">
    <property type="term" value="P:trans-synaptic signaling via exosome"/>
    <property type="evidence" value="ECO:0007669"/>
    <property type="project" value="EnsemblMetazoa"/>
</dbReference>
<dbReference type="GO" id="GO:0061355">
    <property type="term" value="P:Wnt protein secretion"/>
    <property type="evidence" value="ECO:0007669"/>
    <property type="project" value="EnsemblMetazoa"/>
</dbReference>
<dbReference type="GO" id="GO:0016055">
    <property type="term" value="P:Wnt signaling pathway"/>
    <property type="evidence" value="ECO:0007669"/>
    <property type="project" value="UniProtKB-KW"/>
</dbReference>
<dbReference type="InterPro" id="IPR047843">
    <property type="entry name" value="WLS-like_TM"/>
</dbReference>
<dbReference type="InterPro" id="IPR053936">
    <property type="entry name" value="WLS_GOLD"/>
</dbReference>
<dbReference type="InterPro" id="IPR009551">
    <property type="entry name" value="Wntless"/>
</dbReference>
<dbReference type="PANTHER" id="PTHR13449">
    <property type="entry name" value="INTEGRAL MEMBRANE PROTEIN GPR177"/>
    <property type="match status" value="1"/>
</dbReference>
<dbReference type="PANTHER" id="PTHR13449:SF2">
    <property type="entry name" value="PROTEIN WNTLESS HOMOLOG"/>
    <property type="match status" value="1"/>
</dbReference>
<dbReference type="Pfam" id="PF06664">
    <property type="entry name" value="WLS-like_TM"/>
    <property type="match status" value="1"/>
</dbReference>
<dbReference type="Pfam" id="PF21883">
    <property type="entry name" value="WLS_GOLD"/>
    <property type="match status" value="1"/>
</dbReference>
<organism>
    <name type="scientific">Drosophila persimilis</name>
    <name type="common">Fruit fly</name>
    <dbReference type="NCBI Taxonomy" id="7234"/>
    <lineage>
        <taxon>Eukaryota</taxon>
        <taxon>Metazoa</taxon>
        <taxon>Ecdysozoa</taxon>
        <taxon>Arthropoda</taxon>
        <taxon>Hexapoda</taxon>
        <taxon>Insecta</taxon>
        <taxon>Pterygota</taxon>
        <taxon>Neoptera</taxon>
        <taxon>Endopterygota</taxon>
        <taxon>Diptera</taxon>
        <taxon>Brachycera</taxon>
        <taxon>Muscomorpha</taxon>
        <taxon>Ephydroidea</taxon>
        <taxon>Drosophilidae</taxon>
        <taxon>Drosophila</taxon>
        <taxon>Sophophora</taxon>
    </lineage>
</organism>
<comment type="function">
    <text evidence="1">A segment polarity gene required for wingless (wg)-dependent patterning processes, acting in both wg-sending cells and wg-target cells. In non-neuronal cells wls directs wg secretion. The wls traffic loop encompasses the Golgi, the cell surface, an endocytic compartment and a retrograde route leading back to the Golgi, and involves clathrin-mediated endocytosis and the retromer complex (a conserved protein complex consisting of Vps35 and Vps26). In neuronal cells (the larval motorneuron NMJ), the wg signal moves across the synapse via the release of wls-containing exosome-like vesicles. Postsynaptic wls is required for the trafficking of fz2 through the fz2-interacting protein Grip (By similarity).</text>
</comment>
<comment type="subunit">
    <text evidence="1">Interacts with wg; in the Golgi. Interacts with Vps35, a component of the retromer complex; wls stability is regulated by Vps35 (By similarity).</text>
</comment>
<comment type="subcellular location">
    <subcellularLocation>
        <location evidence="3">Presynaptic cell membrane</location>
        <topology evidence="3">Multi-pass membrane protein</topology>
    </subcellularLocation>
    <subcellularLocation>
        <location evidence="3">Postsynaptic cell membrane</location>
        <topology evidence="3">Multi-pass membrane protein</topology>
    </subcellularLocation>
    <subcellularLocation>
        <location evidence="3">Cell membrane</location>
        <topology evidence="3">Multi-pass membrane protein</topology>
    </subcellularLocation>
    <subcellularLocation>
        <location evidence="3">Endoplasmic reticulum membrane</location>
        <topology evidence="3">Multi-pass membrane protein</topology>
    </subcellularLocation>
    <subcellularLocation>
        <location evidence="3">Endosome membrane</location>
        <topology evidence="3">Multi-pass membrane protein</topology>
    </subcellularLocation>
    <subcellularLocation>
        <location evidence="3">Golgi apparatus membrane</location>
        <topology evidence="3">Multi-pass membrane protein</topology>
    </subcellularLocation>
    <text evidence="1">In non-neuronal cells, wls binds to wg in the Golgi and accompanies it to the plasma membrane where the two proteins dissociate. Wg is secreted and wls is then internalized and returns to the Golgi apparatus in a retromer-dependent manner. Wls and wg colocalize in the Golgi apparatus in wg-producing cells, and reduced expression is seen in non-producing cells. Endoplasmic reticulum expression is unchanged in wg-producing versus non-producing cells. In neuronal cells, wls is localized both pre- and postsynaptically and is transferred trans-synaptically from the pre- to the postsynaptic compartment (By similarity).</text>
</comment>
<comment type="similarity">
    <text evidence="4">Belongs to the wntless family.</text>
</comment>